<proteinExistence type="inferred from homology"/>
<gene>
    <name evidence="1" type="primary">rpsT</name>
    <name type="ordered locus">azo2190</name>
</gene>
<name>RS20_AZOSB</name>
<organism>
    <name type="scientific">Azoarcus sp. (strain BH72)</name>
    <dbReference type="NCBI Taxonomy" id="418699"/>
    <lineage>
        <taxon>Bacteria</taxon>
        <taxon>Pseudomonadati</taxon>
        <taxon>Pseudomonadota</taxon>
        <taxon>Betaproteobacteria</taxon>
        <taxon>Rhodocyclales</taxon>
        <taxon>Zoogloeaceae</taxon>
        <taxon>Azoarcus</taxon>
    </lineage>
</organism>
<evidence type="ECO:0000255" key="1">
    <source>
        <dbReference type="HAMAP-Rule" id="MF_00500"/>
    </source>
</evidence>
<evidence type="ECO:0000256" key="2">
    <source>
        <dbReference type="SAM" id="MobiDB-lite"/>
    </source>
</evidence>
<evidence type="ECO:0000305" key="3"/>
<sequence length="88" mass="9421">MANSAQARKRARQATKARAHNASLRSRLRTAIKAVRKAIVGGDKAAAQAVFRTSMSTIDSVADKKIIHKNKAARHKSRLSAAVKAMAA</sequence>
<feature type="chain" id="PRO_1000014547" description="Small ribosomal subunit protein bS20">
    <location>
        <begin position="1"/>
        <end position="88"/>
    </location>
</feature>
<feature type="region of interest" description="Disordered" evidence="2">
    <location>
        <begin position="1"/>
        <end position="25"/>
    </location>
</feature>
<feature type="compositionally biased region" description="Basic residues" evidence="2">
    <location>
        <begin position="7"/>
        <end position="19"/>
    </location>
</feature>
<keyword id="KW-1185">Reference proteome</keyword>
<keyword id="KW-0687">Ribonucleoprotein</keyword>
<keyword id="KW-0689">Ribosomal protein</keyword>
<keyword id="KW-0694">RNA-binding</keyword>
<keyword id="KW-0699">rRNA-binding</keyword>
<protein>
    <recommendedName>
        <fullName evidence="1">Small ribosomal subunit protein bS20</fullName>
    </recommendedName>
    <alternativeName>
        <fullName evidence="3">30S ribosomal protein S20</fullName>
    </alternativeName>
</protein>
<dbReference type="EMBL" id="AM406670">
    <property type="protein sequence ID" value="CAL94807.1"/>
    <property type="molecule type" value="Genomic_DNA"/>
</dbReference>
<dbReference type="RefSeq" id="WP_011765921.1">
    <property type="nucleotide sequence ID" value="NC_008702.1"/>
</dbReference>
<dbReference type="SMR" id="A1K7K2"/>
<dbReference type="STRING" id="62928.azo2190"/>
<dbReference type="KEGG" id="aoa:dqs_2323"/>
<dbReference type="KEGG" id="azo:azo2190"/>
<dbReference type="eggNOG" id="COG0268">
    <property type="taxonomic scope" value="Bacteria"/>
</dbReference>
<dbReference type="HOGENOM" id="CLU_160655_4_0_4"/>
<dbReference type="OrthoDB" id="9807974at2"/>
<dbReference type="Proteomes" id="UP000002588">
    <property type="component" value="Chromosome"/>
</dbReference>
<dbReference type="GO" id="GO:0005829">
    <property type="term" value="C:cytosol"/>
    <property type="evidence" value="ECO:0007669"/>
    <property type="project" value="TreeGrafter"/>
</dbReference>
<dbReference type="GO" id="GO:0015935">
    <property type="term" value="C:small ribosomal subunit"/>
    <property type="evidence" value="ECO:0007669"/>
    <property type="project" value="TreeGrafter"/>
</dbReference>
<dbReference type="GO" id="GO:0070181">
    <property type="term" value="F:small ribosomal subunit rRNA binding"/>
    <property type="evidence" value="ECO:0007669"/>
    <property type="project" value="TreeGrafter"/>
</dbReference>
<dbReference type="GO" id="GO:0003735">
    <property type="term" value="F:structural constituent of ribosome"/>
    <property type="evidence" value="ECO:0007669"/>
    <property type="project" value="InterPro"/>
</dbReference>
<dbReference type="GO" id="GO:0006412">
    <property type="term" value="P:translation"/>
    <property type="evidence" value="ECO:0007669"/>
    <property type="project" value="UniProtKB-UniRule"/>
</dbReference>
<dbReference type="FunFam" id="1.20.58.110:FF:000001">
    <property type="entry name" value="30S ribosomal protein S20"/>
    <property type="match status" value="1"/>
</dbReference>
<dbReference type="Gene3D" id="1.20.58.110">
    <property type="entry name" value="Ribosomal protein S20"/>
    <property type="match status" value="1"/>
</dbReference>
<dbReference type="HAMAP" id="MF_00500">
    <property type="entry name" value="Ribosomal_bS20"/>
    <property type="match status" value="1"/>
</dbReference>
<dbReference type="InterPro" id="IPR002583">
    <property type="entry name" value="Ribosomal_bS20"/>
</dbReference>
<dbReference type="InterPro" id="IPR036510">
    <property type="entry name" value="Ribosomal_bS20_sf"/>
</dbReference>
<dbReference type="NCBIfam" id="TIGR00029">
    <property type="entry name" value="S20"/>
    <property type="match status" value="1"/>
</dbReference>
<dbReference type="PANTHER" id="PTHR33398">
    <property type="entry name" value="30S RIBOSOMAL PROTEIN S20"/>
    <property type="match status" value="1"/>
</dbReference>
<dbReference type="PANTHER" id="PTHR33398:SF1">
    <property type="entry name" value="SMALL RIBOSOMAL SUBUNIT PROTEIN BS20C"/>
    <property type="match status" value="1"/>
</dbReference>
<dbReference type="Pfam" id="PF01649">
    <property type="entry name" value="Ribosomal_S20p"/>
    <property type="match status" value="1"/>
</dbReference>
<dbReference type="SUPFAM" id="SSF46992">
    <property type="entry name" value="Ribosomal protein S20"/>
    <property type="match status" value="1"/>
</dbReference>
<reference key="1">
    <citation type="journal article" date="2006" name="Nat. Biotechnol.">
        <title>Complete genome of the mutualistic, N2-fixing grass endophyte Azoarcus sp. strain BH72.</title>
        <authorList>
            <person name="Krause A."/>
            <person name="Ramakumar A."/>
            <person name="Bartels D."/>
            <person name="Battistoni F."/>
            <person name="Bekel T."/>
            <person name="Boch J."/>
            <person name="Boehm M."/>
            <person name="Friedrich F."/>
            <person name="Hurek T."/>
            <person name="Krause L."/>
            <person name="Linke B."/>
            <person name="McHardy A.C."/>
            <person name="Sarkar A."/>
            <person name="Schneiker S."/>
            <person name="Syed A.A."/>
            <person name="Thauer R."/>
            <person name="Vorhoelter F.-J."/>
            <person name="Weidner S."/>
            <person name="Puehler A."/>
            <person name="Reinhold-Hurek B."/>
            <person name="Kaiser O."/>
            <person name="Goesmann A."/>
        </authorList>
    </citation>
    <scope>NUCLEOTIDE SEQUENCE [LARGE SCALE GENOMIC DNA]</scope>
    <source>
        <strain>BH72</strain>
    </source>
</reference>
<comment type="function">
    <text evidence="1">Binds directly to 16S ribosomal RNA.</text>
</comment>
<comment type="similarity">
    <text evidence="1">Belongs to the bacterial ribosomal protein bS20 family.</text>
</comment>
<accession>A1K7K2</accession>